<feature type="chain" id="PRO_0000151610" description="Arginine--tRNA ligase">
    <location>
        <begin position="1"/>
        <end position="553"/>
    </location>
</feature>
<feature type="short sequence motif" description="'HIGH' region">
    <location>
        <begin position="132"/>
        <end position="140"/>
    </location>
</feature>
<proteinExistence type="inferred from homology"/>
<comment type="catalytic activity">
    <reaction evidence="1">
        <text>tRNA(Arg) + L-arginine + ATP = L-arginyl-tRNA(Arg) + AMP + diphosphate</text>
        <dbReference type="Rhea" id="RHEA:20301"/>
        <dbReference type="Rhea" id="RHEA-COMP:9658"/>
        <dbReference type="Rhea" id="RHEA-COMP:9673"/>
        <dbReference type="ChEBI" id="CHEBI:30616"/>
        <dbReference type="ChEBI" id="CHEBI:32682"/>
        <dbReference type="ChEBI" id="CHEBI:33019"/>
        <dbReference type="ChEBI" id="CHEBI:78442"/>
        <dbReference type="ChEBI" id="CHEBI:78513"/>
        <dbReference type="ChEBI" id="CHEBI:456215"/>
        <dbReference type="EC" id="6.1.1.19"/>
    </reaction>
</comment>
<comment type="subunit">
    <text evidence="1">Monomer.</text>
</comment>
<comment type="subcellular location">
    <subcellularLocation>
        <location evidence="1">Cytoplasm</location>
    </subcellularLocation>
</comment>
<comment type="similarity">
    <text evidence="1">Belongs to the class-I aminoacyl-tRNA synthetase family.</text>
</comment>
<name>SYR_STAAW</name>
<organism>
    <name type="scientific">Staphylococcus aureus (strain MW2)</name>
    <dbReference type="NCBI Taxonomy" id="196620"/>
    <lineage>
        <taxon>Bacteria</taxon>
        <taxon>Bacillati</taxon>
        <taxon>Bacillota</taxon>
        <taxon>Bacilli</taxon>
        <taxon>Bacillales</taxon>
        <taxon>Staphylococcaceae</taxon>
        <taxon>Staphylococcus</taxon>
    </lineage>
</organism>
<reference key="1">
    <citation type="journal article" date="2002" name="Lancet">
        <title>Genome and virulence determinants of high virulence community-acquired MRSA.</title>
        <authorList>
            <person name="Baba T."/>
            <person name="Takeuchi F."/>
            <person name="Kuroda M."/>
            <person name="Yuzawa H."/>
            <person name="Aoki K."/>
            <person name="Oguchi A."/>
            <person name="Nagai Y."/>
            <person name="Iwama N."/>
            <person name="Asano K."/>
            <person name="Naimi T."/>
            <person name="Kuroda H."/>
            <person name="Cui L."/>
            <person name="Yamamoto K."/>
            <person name="Hiramatsu K."/>
        </authorList>
    </citation>
    <scope>NUCLEOTIDE SEQUENCE [LARGE SCALE GENOMIC DNA]</scope>
    <source>
        <strain>MW2</strain>
    </source>
</reference>
<protein>
    <recommendedName>
        <fullName evidence="1">Arginine--tRNA ligase</fullName>
        <ecNumber evidence="1">6.1.1.19</ecNumber>
    </recommendedName>
    <alternativeName>
        <fullName evidence="1">Arginyl-tRNA synthetase</fullName>
        <shortName evidence="1">ArgRS</shortName>
    </alternativeName>
</protein>
<gene>
    <name evidence="1" type="primary">argS</name>
    <name type="ordered locus">MW0571</name>
</gene>
<accession>Q8NXT8</accession>
<sequence>MNIIDQVKQTLVEEIAASINKAGLADEIPDIKIEVPKDTKNGDYATNIAMVLTKIAKRNPREIAQAIVDNLDTEKAHVKQIDIAGPGFINFYLDNQYLTAIIPEAIEKGDQFGHVNESKGQNVLLEYVSANPTGDLHIGHARNAAVGDALANILTAAGYNVTREYYINDAGNQITNLARSIETRFFEALGDNSYSMPEDGYNGKDIIEIGKDLAEKHPEIKDYSEEARLKEFRKLGVEYEMAKLKNDLAEFNTHFDNWFSETSLYEKGEILEVLAKMKELGYTYEADGATWLRTTDFKDDKDRVLIKNDGTYTYFLPDIAYHFDKVKRGNDILIDLFGADHHGYINRLKASLETFGVDSNRLEIQIMQMVRLMENGKEVKMSKRTGNAITLREIMDEVGVDAARYFLTMRSPDSHFDFDMELAKEQSQDNPVYYAQYAHARICSILKQAKEQGIEVTAANDFTTITNEKAIELLKKVADFEPTIESAAEHRSAHRITNYIQDLASHFHKFYNAEKVLTDDIEKTKAHVAMIEAVRITLKNALAMVGVSAPESM</sequence>
<keyword id="KW-0030">Aminoacyl-tRNA synthetase</keyword>
<keyword id="KW-0067">ATP-binding</keyword>
<keyword id="KW-0963">Cytoplasm</keyword>
<keyword id="KW-0436">Ligase</keyword>
<keyword id="KW-0547">Nucleotide-binding</keyword>
<keyword id="KW-0648">Protein biosynthesis</keyword>
<evidence type="ECO:0000255" key="1">
    <source>
        <dbReference type="HAMAP-Rule" id="MF_00123"/>
    </source>
</evidence>
<dbReference type="EC" id="6.1.1.19" evidence="1"/>
<dbReference type="EMBL" id="BA000033">
    <property type="protein sequence ID" value="BAB94436.1"/>
    <property type="molecule type" value="Genomic_DNA"/>
</dbReference>
<dbReference type="RefSeq" id="WP_001021145.1">
    <property type="nucleotide sequence ID" value="NC_003923.1"/>
</dbReference>
<dbReference type="SMR" id="Q8NXT8"/>
<dbReference type="KEGG" id="sam:MW0571"/>
<dbReference type="HOGENOM" id="CLU_006406_0_1_9"/>
<dbReference type="GO" id="GO:0005737">
    <property type="term" value="C:cytoplasm"/>
    <property type="evidence" value="ECO:0007669"/>
    <property type="project" value="UniProtKB-SubCell"/>
</dbReference>
<dbReference type="GO" id="GO:0004814">
    <property type="term" value="F:arginine-tRNA ligase activity"/>
    <property type="evidence" value="ECO:0007669"/>
    <property type="project" value="UniProtKB-UniRule"/>
</dbReference>
<dbReference type="GO" id="GO:0005524">
    <property type="term" value="F:ATP binding"/>
    <property type="evidence" value="ECO:0007669"/>
    <property type="project" value="UniProtKB-UniRule"/>
</dbReference>
<dbReference type="GO" id="GO:0006420">
    <property type="term" value="P:arginyl-tRNA aminoacylation"/>
    <property type="evidence" value="ECO:0007669"/>
    <property type="project" value="UniProtKB-UniRule"/>
</dbReference>
<dbReference type="CDD" id="cd00671">
    <property type="entry name" value="ArgRS_core"/>
    <property type="match status" value="1"/>
</dbReference>
<dbReference type="FunFam" id="1.10.730.10:FF:000008">
    <property type="entry name" value="Arginine--tRNA ligase"/>
    <property type="match status" value="1"/>
</dbReference>
<dbReference type="FunFam" id="3.30.1360.70:FF:000003">
    <property type="entry name" value="Arginine--tRNA ligase"/>
    <property type="match status" value="1"/>
</dbReference>
<dbReference type="FunFam" id="3.40.50.620:FF:000062">
    <property type="entry name" value="Arginine--tRNA ligase"/>
    <property type="match status" value="1"/>
</dbReference>
<dbReference type="Gene3D" id="3.30.1360.70">
    <property type="entry name" value="Arginyl tRNA synthetase N-terminal domain"/>
    <property type="match status" value="1"/>
</dbReference>
<dbReference type="Gene3D" id="3.40.50.620">
    <property type="entry name" value="HUPs"/>
    <property type="match status" value="1"/>
</dbReference>
<dbReference type="Gene3D" id="1.10.730.10">
    <property type="entry name" value="Isoleucyl-tRNA Synthetase, Domain 1"/>
    <property type="match status" value="1"/>
</dbReference>
<dbReference type="HAMAP" id="MF_00123">
    <property type="entry name" value="Arg_tRNA_synth"/>
    <property type="match status" value="1"/>
</dbReference>
<dbReference type="InterPro" id="IPR001412">
    <property type="entry name" value="aa-tRNA-synth_I_CS"/>
</dbReference>
<dbReference type="InterPro" id="IPR001278">
    <property type="entry name" value="Arg-tRNA-ligase"/>
</dbReference>
<dbReference type="InterPro" id="IPR005148">
    <property type="entry name" value="Arg-tRNA-synth_N"/>
</dbReference>
<dbReference type="InterPro" id="IPR036695">
    <property type="entry name" value="Arg-tRNA-synth_N_sf"/>
</dbReference>
<dbReference type="InterPro" id="IPR035684">
    <property type="entry name" value="ArgRS_core"/>
</dbReference>
<dbReference type="InterPro" id="IPR008909">
    <property type="entry name" value="DALR_anticod-bd"/>
</dbReference>
<dbReference type="InterPro" id="IPR014729">
    <property type="entry name" value="Rossmann-like_a/b/a_fold"/>
</dbReference>
<dbReference type="InterPro" id="IPR009080">
    <property type="entry name" value="tRNAsynth_Ia_anticodon-bd"/>
</dbReference>
<dbReference type="NCBIfam" id="TIGR00456">
    <property type="entry name" value="argS"/>
    <property type="match status" value="1"/>
</dbReference>
<dbReference type="PANTHER" id="PTHR11956:SF5">
    <property type="entry name" value="ARGININE--TRNA LIGASE, CYTOPLASMIC"/>
    <property type="match status" value="1"/>
</dbReference>
<dbReference type="PANTHER" id="PTHR11956">
    <property type="entry name" value="ARGINYL-TRNA SYNTHETASE"/>
    <property type="match status" value="1"/>
</dbReference>
<dbReference type="Pfam" id="PF03485">
    <property type="entry name" value="Arg_tRNA_synt_N"/>
    <property type="match status" value="1"/>
</dbReference>
<dbReference type="Pfam" id="PF05746">
    <property type="entry name" value="DALR_1"/>
    <property type="match status" value="1"/>
</dbReference>
<dbReference type="Pfam" id="PF00750">
    <property type="entry name" value="tRNA-synt_1d"/>
    <property type="match status" value="1"/>
</dbReference>
<dbReference type="PRINTS" id="PR01038">
    <property type="entry name" value="TRNASYNTHARG"/>
</dbReference>
<dbReference type="SMART" id="SM01016">
    <property type="entry name" value="Arg_tRNA_synt_N"/>
    <property type="match status" value="1"/>
</dbReference>
<dbReference type="SMART" id="SM00836">
    <property type="entry name" value="DALR_1"/>
    <property type="match status" value="1"/>
</dbReference>
<dbReference type="SUPFAM" id="SSF47323">
    <property type="entry name" value="Anticodon-binding domain of a subclass of class I aminoacyl-tRNA synthetases"/>
    <property type="match status" value="1"/>
</dbReference>
<dbReference type="SUPFAM" id="SSF55190">
    <property type="entry name" value="Arginyl-tRNA synthetase (ArgRS), N-terminal 'additional' domain"/>
    <property type="match status" value="1"/>
</dbReference>
<dbReference type="SUPFAM" id="SSF52374">
    <property type="entry name" value="Nucleotidylyl transferase"/>
    <property type="match status" value="1"/>
</dbReference>
<dbReference type="PROSITE" id="PS00178">
    <property type="entry name" value="AA_TRNA_LIGASE_I"/>
    <property type="match status" value="1"/>
</dbReference>